<proteinExistence type="inferred from homology"/>
<name>GREA_BUCA5</name>
<comment type="function">
    <text evidence="1">Necessary for efficient RNA polymerase transcription elongation past template-encoded arresting sites. The arresting sites in DNA have the property of trapping a certain fraction of elongating RNA polymerases that pass through, resulting in locked ternary complexes. Cleavage of the nascent transcript by cleavage factors such as GreA or GreB allows the resumption of elongation from the new 3'terminus. GreA releases sequences of 2 to 3 nucleotides.</text>
</comment>
<comment type="similarity">
    <text evidence="1">Belongs to the GreA/GreB family.</text>
</comment>
<dbReference type="EMBL" id="CP001161">
    <property type="protein sequence ID" value="ACL30738.1"/>
    <property type="molecule type" value="Genomic_DNA"/>
</dbReference>
<dbReference type="SMR" id="B8D9G7"/>
<dbReference type="KEGG" id="bap:BUAP5A_377"/>
<dbReference type="HOGENOM" id="CLU_101379_2_0_6"/>
<dbReference type="OrthoDB" id="9808774at2"/>
<dbReference type="Proteomes" id="UP000006904">
    <property type="component" value="Chromosome"/>
</dbReference>
<dbReference type="GO" id="GO:0003677">
    <property type="term" value="F:DNA binding"/>
    <property type="evidence" value="ECO:0007669"/>
    <property type="project" value="UniProtKB-UniRule"/>
</dbReference>
<dbReference type="GO" id="GO:0070063">
    <property type="term" value="F:RNA polymerase binding"/>
    <property type="evidence" value="ECO:0007669"/>
    <property type="project" value="InterPro"/>
</dbReference>
<dbReference type="GO" id="GO:0006354">
    <property type="term" value="P:DNA-templated transcription elongation"/>
    <property type="evidence" value="ECO:0007669"/>
    <property type="project" value="TreeGrafter"/>
</dbReference>
<dbReference type="GO" id="GO:0032784">
    <property type="term" value="P:regulation of DNA-templated transcription elongation"/>
    <property type="evidence" value="ECO:0007669"/>
    <property type="project" value="UniProtKB-UniRule"/>
</dbReference>
<dbReference type="FunFam" id="1.10.287.180:FF:000001">
    <property type="entry name" value="Transcription elongation factor GreA"/>
    <property type="match status" value="1"/>
</dbReference>
<dbReference type="FunFam" id="3.10.50.30:FF:000001">
    <property type="entry name" value="Transcription elongation factor GreA"/>
    <property type="match status" value="1"/>
</dbReference>
<dbReference type="Gene3D" id="3.10.50.30">
    <property type="entry name" value="Transcription elongation factor, GreA/GreB, C-terminal domain"/>
    <property type="match status" value="1"/>
</dbReference>
<dbReference type="Gene3D" id="1.10.287.180">
    <property type="entry name" value="Transcription elongation factor, GreA/GreB, N-terminal domain"/>
    <property type="match status" value="1"/>
</dbReference>
<dbReference type="HAMAP" id="MF_00105">
    <property type="entry name" value="GreA_GreB"/>
    <property type="match status" value="1"/>
</dbReference>
<dbReference type="InterPro" id="IPR036953">
    <property type="entry name" value="GreA/GreB_C_sf"/>
</dbReference>
<dbReference type="InterPro" id="IPR018151">
    <property type="entry name" value="TF_GreA/GreB_CS"/>
</dbReference>
<dbReference type="InterPro" id="IPR006359">
    <property type="entry name" value="Tscrpt_elong_fac_GreA"/>
</dbReference>
<dbReference type="InterPro" id="IPR028624">
    <property type="entry name" value="Tscrpt_elong_fac_GreA/B"/>
</dbReference>
<dbReference type="InterPro" id="IPR001437">
    <property type="entry name" value="Tscrpt_elong_fac_GreA/B_C"/>
</dbReference>
<dbReference type="InterPro" id="IPR023459">
    <property type="entry name" value="Tscrpt_elong_fac_GreA/B_fam"/>
</dbReference>
<dbReference type="InterPro" id="IPR022691">
    <property type="entry name" value="Tscrpt_elong_fac_GreA/B_N"/>
</dbReference>
<dbReference type="InterPro" id="IPR036805">
    <property type="entry name" value="Tscrpt_elong_fac_GreA/B_N_sf"/>
</dbReference>
<dbReference type="NCBIfam" id="TIGR01462">
    <property type="entry name" value="greA"/>
    <property type="match status" value="1"/>
</dbReference>
<dbReference type="NCBIfam" id="NF001261">
    <property type="entry name" value="PRK00226.1-2"/>
    <property type="match status" value="1"/>
</dbReference>
<dbReference type="NCBIfam" id="NF001263">
    <property type="entry name" value="PRK00226.1-4"/>
    <property type="match status" value="1"/>
</dbReference>
<dbReference type="NCBIfam" id="NF001264">
    <property type="entry name" value="PRK00226.1-5"/>
    <property type="match status" value="1"/>
</dbReference>
<dbReference type="PANTHER" id="PTHR30437">
    <property type="entry name" value="TRANSCRIPTION ELONGATION FACTOR GREA"/>
    <property type="match status" value="1"/>
</dbReference>
<dbReference type="PANTHER" id="PTHR30437:SF4">
    <property type="entry name" value="TRANSCRIPTION ELONGATION FACTOR GREA"/>
    <property type="match status" value="1"/>
</dbReference>
<dbReference type="Pfam" id="PF01272">
    <property type="entry name" value="GreA_GreB"/>
    <property type="match status" value="1"/>
</dbReference>
<dbReference type="Pfam" id="PF03449">
    <property type="entry name" value="GreA_GreB_N"/>
    <property type="match status" value="1"/>
</dbReference>
<dbReference type="PIRSF" id="PIRSF006092">
    <property type="entry name" value="GreA_GreB"/>
    <property type="match status" value="1"/>
</dbReference>
<dbReference type="SUPFAM" id="SSF54534">
    <property type="entry name" value="FKBP-like"/>
    <property type="match status" value="1"/>
</dbReference>
<dbReference type="SUPFAM" id="SSF46557">
    <property type="entry name" value="GreA transcript cleavage protein, N-terminal domain"/>
    <property type="match status" value="1"/>
</dbReference>
<dbReference type="PROSITE" id="PS00829">
    <property type="entry name" value="GREAB_1"/>
    <property type="match status" value="1"/>
</dbReference>
<dbReference type="PROSITE" id="PS00830">
    <property type="entry name" value="GREAB_2"/>
    <property type="match status" value="1"/>
</dbReference>
<organism>
    <name type="scientific">Buchnera aphidicola subsp. Acyrthosiphon pisum (strain 5A)</name>
    <dbReference type="NCBI Taxonomy" id="563178"/>
    <lineage>
        <taxon>Bacteria</taxon>
        <taxon>Pseudomonadati</taxon>
        <taxon>Pseudomonadota</taxon>
        <taxon>Gammaproteobacteria</taxon>
        <taxon>Enterobacterales</taxon>
        <taxon>Erwiniaceae</taxon>
        <taxon>Buchnera</taxon>
    </lineage>
</organism>
<feature type="chain" id="PRO_1000118950" description="Transcription elongation factor GreA">
    <location>
        <begin position="1"/>
        <end position="159"/>
    </location>
</feature>
<protein>
    <recommendedName>
        <fullName evidence="1">Transcription elongation factor GreA</fullName>
    </recommendedName>
    <alternativeName>
        <fullName evidence="1">Transcript cleavage factor GreA</fullName>
    </alternativeName>
</protein>
<sequence>MINLIPMTVRGAEKLRRELKKLKSINRPRIIAAIAEAREHGDLKENAEYHSAREEQSFCEGRIKEIELKLSNSQIIDVTKISNNGRVIFGSTVSILNIKNNEKFTYRIVGDDESDFKKNLISINSPIARGLIGKEINDVVIICTPGGDVEYKILKINYI</sequence>
<keyword id="KW-0238">DNA-binding</keyword>
<keyword id="KW-0804">Transcription</keyword>
<keyword id="KW-0805">Transcription regulation</keyword>
<gene>
    <name evidence="1" type="primary">greA</name>
    <name type="ordered locus">BUAP5A_377</name>
</gene>
<reference key="1">
    <citation type="journal article" date="2009" name="Science">
        <title>The dynamics and time scale of ongoing genomic erosion in symbiotic bacteria.</title>
        <authorList>
            <person name="Moran N.A."/>
            <person name="McLaughlin H.J."/>
            <person name="Sorek R."/>
        </authorList>
    </citation>
    <scope>NUCLEOTIDE SEQUENCE [LARGE SCALE GENOMIC DNA]</scope>
    <source>
        <strain>5A</strain>
    </source>
</reference>
<accession>B8D9G7</accession>
<evidence type="ECO:0000255" key="1">
    <source>
        <dbReference type="HAMAP-Rule" id="MF_00105"/>
    </source>
</evidence>